<feature type="chain" id="PRO_1000189618" description="Adenosylcobinamide-GDP ribazoletransferase">
    <location>
        <begin position="1"/>
        <end position="259"/>
    </location>
</feature>
<feature type="transmembrane region" description="Helical" evidence="1">
    <location>
        <begin position="37"/>
        <end position="57"/>
    </location>
</feature>
<feature type="transmembrane region" description="Helical" evidence="1">
    <location>
        <begin position="58"/>
        <end position="78"/>
    </location>
</feature>
<feature type="transmembrane region" description="Helical" evidence="1">
    <location>
        <begin position="118"/>
        <end position="138"/>
    </location>
</feature>
<feature type="transmembrane region" description="Helical" evidence="1">
    <location>
        <begin position="143"/>
        <end position="163"/>
    </location>
</feature>
<feature type="transmembrane region" description="Helical" evidence="1">
    <location>
        <begin position="195"/>
        <end position="215"/>
    </location>
</feature>
<feature type="transmembrane region" description="Helical" evidence="1">
    <location>
        <begin position="237"/>
        <end position="257"/>
    </location>
</feature>
<sequence>MQSWRQQLNLFLIAMGFFTRIPMPKWVEVDAEKLNQASRYFGLVGTLIGVLSALVYSVMLHWVSPSIAIIFAMIASVLLTGGFHEDGLADTADGLGGGWTVEAKLQIMKDSRLGSYGALALVLCLLLKWQLLSELALFDPSSVSLALILGHTLSRVVAASFIFSEQYVSDDASSKSKPLAMQQSINELSILLATAAISLLLISFMQALVLILGLLSVRIALAWWFNKQIGGYTGDTLGATQQIAEVVCYLLLLIVGASW</sequence>
<comment type="function">
    <text evidence="1">Joins adenosylcobinamide-GDP and alpha-ribazole to generate adenosylcobalamin (Ado-cobalamin). Also synthesizes adenosylcobalamin 5'-phosphate from adenosylcobinamide-GDP and alpha-ribazole 5'-phosphate.</text>
</comment>
<comment type="catalytic activity">
    <reaction evidence="1">
        <text>alpha-ribazole + adenosylcob(III)inamide-GDP = adenosylcob(III)alamin + GMP + H(+)</text>
        <dbReference type="Rhea" id="RHEA:16049"/>
        <dbReference type="ChEBI" id="CHEBI:10329"/>
        <dbReference type="ChEBI" id="CHEBI:15378"/>
        <dbReference type="ChEBI" id="CHEBI:18408"/>
        <dbReference type="ChEBI" id="CHEBI:58115"/>
        <dbReference type="ChEBI" id="CHEBI:60487"/>
        <dbReference type="EC" id="2.7.8.26"/>
    </reaction>
</comment>
<comment type="catalytic activity">
    <reaction evidence="1">
        <text>alpha-ribazole 5'-phosphate + adenosylcob(III)inamide-GDP = adenosylcob(III)alamin 5'-phosphate + GMP + H(+)</text>
        <dbReference type="Rhea" id="RHEA:23560"/>
        <dbReference type="ChEBI" id="CHEBI:15378"/>
        <dbReference type="ChEBI" id="CHEBI:57918"/>
        <dbReference type="ChEBI" id="CHEBI:58115"/>
        <dbReference type="ChEBI" id="CHEBI:60487"/>
        <dbReference type="ChEBI" id="CHEBI:60493"/>
        <dbReference type="EC" id="2.7.8.26"/>
    </reaction>
</comment>
<comment type="cofactor">
    <cofactor evidence="1">
        <name>Mg(2+)</name>
        <dbReference type="ChEBI" id="CHEBI:18420"/>
    </cofactor>
</comment>
<comment type="pathway">
    <text evidence="1">Cofactor biosynthesis; adenosylcobalamin biosynthesis; adenosylcobalamin from cob(II)yrinate a,c-diamide: step 7/7.</text>
</comment>
<comment type="subcellular location">
    <subcellularLocation>
        <location evidence="1">Cell inner membrane</location>
        <topology evidence="1">Multi-pass membrane protein</topology>
    </subcellularLocation>
</comment>
<comment type="similarity">
    <text evidence="1">Belongs to the CobS family.</text>
</comment>
<accession>B8CJ38</accession>
<reference key="1">
    <citation type="journal article" date="2008" name="PLoS ONE">
        <title>Environmental adaptation: genomic analysis of the piezotolerant and psychrotolerant deep-sea iron reducing bacterium Shewanella piezotolerans WP3.</title>
        <authorList>
            <person name="Wang F."/>
            <person name="Wang J."/>
            <person name="Jian H."/>
            <person name="Zhang B."/>
            <person name="Li S."/>
            <person name="Wang F."/>
            <person name="Zeng X."/>
            <person name="Gao L."/>
            <person name="Bartlett D.H."/>
            <person name="Yu J."/>
            <person name="Hu S."/>
            <person name="Xiao X."/>
        </authorList>
    </citation>
    <scope>NUCLEOTIDE SEQUENCE [LARGE SCALE GENOMIC DNA]</scope>
    <source>
        <strain>WP3 / JCM 13877</strain>
    </source>
</reference>
<gene>
    <name evidence="1" type="primary">cobS</name>
    <name type="ordered locus">swp_0997</name>
</gene>
<organism>
    <name type="scientific">Shewanella piezotolerans (strain WP3 / JCM 13877)</name>
    <dbReference type="NCBI Taxonomy" id="225849"/>
    <lineage>
        <taxon>Bacteria</taxon>
        <taxon>Pseudomonadati</taxon>
        <taxon>Pseudomonadota</taxon>
        <taxon>Gammaproteobacteria</taxon>
        <taxon>Alteromonadales</taxon>
        <taxon>Shewanellaceae</taxon>
        <taxon>Shewanella</taxon>
    </lineage>
</organism>
<keyword id="KW-0997">Cell inner membrane</keyword>
<keyword id="KW-1003">Cell membrane</keyword>
<keyword id="KW-0169">Cobalamin biosynthesis</keyword>
<keyword id="KW-0460">Magnesium</keyword>
<keyword id="KW-0472">Membrane</keyword>
<keyword id="KW-0808">Transferase</keyword>
<keyword id="KW-0812">Transmembrane</keyword>
<keyword id="KW-1133">Transmembrane helix</keyword>
<proteinExistence type="inferred from homology"/>
<name>COBS_SHEPW</name>
<protein>
    <recommendedName>
        <fullName evidence="1">Adenosylcobinamide-GDP ribazoletransferase</fullName>
        <ecNumber evidence="1">2.7.8.26</ecNumber>
    </recommendedName>
    <alternativeName>
        <fullName evidence="1">Cobalamin synthase</fullName>
    </alternativeName>
    <alternativeName>
        <fullName evidence="1">Cobalamin-5'-phosphate synthase</fullName>
    </alternativeName>
</protein>
<dbReference type="EC" id="2.7.8.26" evidence="1"/>
<dbReference type="EMBL" id="CP000472">
    <property type="protein sequence ID" value="ACJ27800.1"/>
    <property type="molecule type" value="Genomic_DNA"/>
</dbReference>
<dbReference type="RefSeq" id="WP_020911178.1">
    <property type="nucleotide sequence ID" value="NC_011566.1"/>
</dbReference>
<dbReference type="STRING" id="225849.swp_0997"/>
<dbReference type="KEGG" id="swp:swp_0997"/>
<dbReference type="eggNOG" id="COG0368">
    <property type="taxonomic scope" value="Bacteria"/>
</dbReference>
<dbReference type="HOGENOM" id="CLU_057426_1_1_6"/>
<dbReference type="OrthoDB" id="9794626at2"/>
<dbReference type="UniPathway" id="UPA00148">
    <property type="reaction ID" value="UER00238"/>
</dbReference>
<dbReference type="Proteomes" id="UP000000753">
    <property type="component" value="Chromosome"/>
</dbReference>
<dbReference type="GO" id="GO:0005886">
    <property type="term" value="C:plasma membrane"/>
    <property type="evidence" value="ECO:0007669"/>
    <property type="project" value="UniProtKB-SubCell"/>
</dbReference>
<dbReference type="GO" id="GO:0051073">
    <property type="term" value="F:adenosylcobinamide-GDP ribazoletransferase activity"/>
    <property type="evidence" value="ECO:0007669"/>
    <property type="project" value="UniProtKB-UniRule"/>
</dbReference>
<dbReference type="GO" id="GO:0008818">
    <property type="term" value="F:cobalamin 5'-phosphate synthase activity"/>
    <property type="evidence" value="ECO:0007669"/>
    <property type="project" value="UniProtKB-UniRule"/>
</dbReference>
<dbReference type="GO" id="GO:0009236">
    <property type="term" value="P:cobalamin biosynthetic process"/>
    <property type="evidence" value="ECO:0007669"/>
    <property type="project" value="UniProtKB-UniRule"/>
</dbReference>
<dbReference type="HAMAP" id="MF_00719">
    <property type="entry name" value="CobS"/>
    <property type="match status" value="1"/>
</dbReference>
<dbReference type="InterPro" id="IPR003805">
    <property type="entry name" value="CobS"/>
</dbReference>
<dbReference type="NCBIfam" id="TIGR00317">
    <property type="entry name" value="cobS"/>
    <property type="match status" value="1"/>
</dbReference>
<dbReference type="NCBIfam" id="NF001277">
    <property type="entry name" value="PRK00235.1-3"/>
    <property type="match status" value="1"/>
</dbReference>
<dbReference type="PANTHER" id="PTHR34148">
    <property type="entry name" value="ADENOSYLCOBINAMIDE-GDP RIBAZOLETRANSFERASE"/>
    <property type="match status" value="1"/>
</dbReference>
<dbReference type="PANTHER" id="PTHR34148:SF1">
    <property type="entry name" value="ADENOSYLCOBINAMIDE-GDP RIBAZOLETRANSFERASE"/>
    <property type="match status" value="1"/>
</dbReference>
<dbReference type="Pfam" id="PF02654">
    <property type="entry name" value="CobS"/>
    <property type="match status" value="1"/>
</dbReference>
<evidence type="ECO:0000255" key="1">
    <source>
        <dbReference type="HAMAP-Rule" id="MF_00719"/>
    </source>
</evidence>